<feature type="chain" id="PRO_0000240237" description="Complexin-4">
    <location>
        <begin position="1"/>
        <end position="157"/>
    </location>
</feature>
<feature type="propeptide" id="PRO_0000240238" description="Removed in mature form">
    <location>
        <begin position="158"/>
        <end position="160"/>
    </location>
</feature>
<feature type="region of interest" description="Disordered" evidence="1">
    <location>
        <begin position="14"/>
        <end position="44"/>
    </location>
</feature>
<feature type="modified residue" description="Cysteine methyl ester" evidence="2">
    <location>
        <position position="157"/>
    </location>
</feature>
<feature type="lipid moiety-binding region" description="S-farnesyl cysteine" evidence="2">
    <location>
        <position position="157"/>
    </location>
</feature>
<feature type="sequence conflict" description="In Ref. 2; BAC31843." evidence="6" ref="2">
    <original>D</original>
    <variation>G</variation>
    <location>
        <position position="136"/>
    </location>
</feature>
<feature type="sequence conflict" description="In Ref. 1; AAP22134." evidence="6" ref="1">
    <original>T</original>
    <variation>P</variation>
    <location>
        <position position="145"/>
    </location>
</feature>
<proteinExistence type="evidence at protein level"/>
<evidence type="ECO:0000256" key="1">
    <source>
        <dbReference type="SAM" id="MobiDB-lite"/>
    </source>
</evidence>
<evidence type="ECO:0000269" key="2">
    <source>
    </source>
</evidence>
<evidence type="ECO:0000269" key="3">
    <source>
    </source>
</evidence>
<evidence type="ECO:0000269" key="4">
    <source>
    </source>
</evidence>
<evidence type="ECO:0000269" key="5">
    <source>
    </source>
</evidence>
<evidence type="ECO:0000305" key="6"/>
<sequence>MAFFVKNMISNQVKNLGFGGGSEEKKEEGGTSDPAAAKGMTREEYEEYQKQMIEEKMERDAAFTQKKAERACLRVHLRDKYRLPKSEMDETQIQLAGDDVDLPEDLRKMVDEDQDEEEEKDSILGQLQNLQNMDLDTIKEKAQATFTEIKQSAEQKCSVM</sequence>
<dbReference type="EMBL" id="AY264291">
    <property type="protein sequence ID" value="AAP22134.1"/>
    <property type="molecule type" value="mRNA"/>
</dbReference>
<dbReference type="EMBL" id="AK044262">
    <property type="protein sequence ID" value="BAC31843.1"/>
    <property type="molecule type" value="mRNA"/>
</dbReference>
<dbReference type="EMBL" id="BC016082">
    <property type="protein sequence ID" value="AAH16082.1"/>
    <property type="molecule type" value="mRNA"/>
</dbReference>
<dbReference type="EMBL" id="BC029011">
    <property type="protein sequence ID" value="AAH29011.1"/>
    <property type="molecule type" value="mRNA"/>
</dbReference>
<dbReference type="CCDS" id="CCDS29312.1"/>
<dbReference type="RefSeq" id="NP_663468.1">
    <property type="nucleotide sequence ID" value="NM_145493.1"/>
</dbReference>
<dbReference type="SMR" id="Q80WM3"/>
<dbReference type="FunCoup" id="Q80WM3">
    <property type="interactions" value="112"/>
</dbReference>
<dbReference type="STRING" id="10090.ENSMUSP00000025397"/>
<dbReference type="iPTMnet" id="Q80WM3"/>
<dbReference type="PhosphoSitePlus" id="Q80WM3"/>
<dbReference type="PaxDb" id="10090-ENSMUSP00000025397"/>
<dbReference type="PeptideAtlas" id="Q80WM3"/>
<dbReference type="ProteomicsDB" id="284001"/>
<dbReference type="Antibodypedia" id="42122">
    <property type="antibodies" value="65 antibodies from 14 providers"/>
</dbReference>
<dbReference type="Ensembl" id="ENSMUST00000025397.7">
    <property type="protein sequence ID" value="ENSMUSP00000025397.6"/>
    <property type="gene ID" value="ENSMUSG00000024519.7"/>
</dbReference>
<dbReference type="GeneID" id="225644"/>
<dbReference type="KEGG" id="mmu:225644"/>
<dbReference type="UCSC" id="uc008ffm.1">
    <property type="organism name" value="mouse"/>
</dbReference>
<dbReference type="AGR" id="MGI:2685803"/>
<dbReference type="CTD" id="339302"/>
<dbReference type="MGI" id="MGI:2685803">
    <property type="gene designation" value="Cplx4"/>
</dbReference>
<dbReference type="VEuPathDB" id="HostDB:ENSMUSG00000024519"/>
<dbReference type="eggNOG" id="ENOG502RY7Q">
    <property type="taxonomic scope" value="Eukaryota"/>
</dbReference>
<dbReference type="GeneTree" id="ENSGT00950000182938"/>
<dbReference type="HOGENOM" id="CLU_141096_0_0_1"/>
<dbReference type="InParanoid" id="Q80WM3"/>
<dbReference type="OMA" id="SLMGQFQ"/>
<dbReference type="OrthoDB" id="9942329at2759"/>
<dbReference type="PhylomeDB" id="Q80WM3"/>
<dbReference type="TreeFam" id="TF331867"/>
<dbReference type="BioGRID-ORCS" id="225644">
    <property type="hits" value="4 hits in 78 CRISPR screens"/>
</dbReference>
<dbReference type="ChiTaRS" id="Cplx4">
    <property type="organism name" value="mouse"/>
</dbReference>
<dbReference type="PRO" id="PR:Q80WM3"/>
<dbReference type="Proteomes" id="UP000000589">
    <property type="component" value="Chromosome 18"/>
</dbReference>
<dbReference type="RNAct" id="Q80WM3">
    <property type="molecule type" value="protein"/>
</dbReference>
<dbReference type="Bgee" id="ENSMUSG00000024519">
    <property type="expression patterns" value="Expressed in retinal neural layer and 12 other cell types or tissues"/>
</dbReference>
<dbReference type="GO" id="GO:0005886">
    <property type="term" value="C:plasma membrane"/>
    <property type="evidence" value="ECO:0007669"/>
    <property type="project" value="UniProtKB-SubCell"/>
</dbReference>
<dbReference type="GO" id="GO:0045202">
    <property type="term" value="C:synapse"/>
    <property type="evidence" value="ECO:0000314"/>
    <property type="project" value="MGI"/>
</dbReference>
<dbReference type="GO" id="GO:0000149">
    <property type="term" value="F:SNARE binding"/>
    <property type="evidence" value="ECO:0000314"/>
    <property type="project" value="MGI"/>
</dbReference>
<dbReference type="GO" id="GO:0019905">
    <property type="term" value="F:syntaxin binding"/>
    <property type="evidence" value="ECO:0007669"/>
    <property type="project" value="InterPro"/>
</dbReference>
<dbReference type="GO" id="GO:0006887">
    <property type="term" value="P:exocytosis"/>
    <property type="evidence" value="ECO:0007669"/>
    <property type="project" value="UniProtKB-KW"/>
</dbReference>
<dbReference type="GO" id="GO:0006836">
    <property type="term" value="P:neurotransmitter transport"/>
    <property type="evidence" value="ECO:0007669"/>
    <property type="project" value="UniProtKB-KW"/>
</dbReference>
<dbReference type="GO" id="GO:0046928">
    <property type="term" value="P:regulation of neurotransmitter secretion"/>
    <property type="evidence" value="ECO:0000314"/>
    <property type="project" value="MGI"/>
</dbReference>
<dbReference type="GO" id="GO:0007601">
    <property type="term" value="P:visual perception"/>
    <property type="evidence" value="ECO:0007669"/>
    <property type="project" value="UniProtKB-KW"/>
</dbReference>
<dbReference type="CDD" id="cd22809">
    <property type="entry name" value="Complexin_NTD_CPLX_III_IV"/>
    <property type="match status" value="1"/>
</dbReference>
<dbReference type="Gene3D" id="1.20.5.580">
    <property type="entry name" value="Single Helix bin"/>
    <property type="match status" value="1"/>
</dbReference>
<dbReference type="InterPro" id="IPR008849">
    <property type="entry name" value="Synaphin"/>
</dbReference>
<dbReference type="PANTHER" id="PTHR16705">
    <property type="entry name" value="COMPLEXIN"/>
    <property type="match status" value="1"/>
</dbReference>
<dbReference type="PANTHER" id="PTHR16705:SF7">
    <property type="entry name" value="COMPLEXIN-4"/>
    <property type="match status" value="1"/>
</dbReference>
<dbReference type="Pfam" id="PF05835">
    <property type="entry name" value="Synaphin"/>
    <property type="match status" value="1"/>
</dbReference>
<keyword id="KW-1003">Cell membrane</keyword>
<keyword id="KW-0268">Exocytosis</keyword>
<keyword id="KW-0449">Lipoprotein</keyword>
<keyword id="KW-0472">Membrane</keyword>
<keyword id="KW-0488">Methylation</keyword>
<keyword id="KW-0532">Neurotransmitter transport</keyword>
<keyword id="KW-0636">Prenylation</keyword>
<keyword id="KW-1185">Reference proteome</keyword>
<keyword id="KW-0716">Sensory transduction</keyword>
<keyword id="KW-0770">Synapse</keyword>
<keyword id="KW-0813">Transport</keyword>
<keyword id="KW-0844">Vision</keyword>
<gene>
    <name type="primary">Cplx4</name>
</gene>
<protein>
    <recommendedName>
        <fullName>Complexin-4</fullName>
    </recommendedName>
    <alternativeName>
        <fullName>Complexin IV</fullName>
        <shortName>CPX IV</shortName>
    </alternativeName>
</protein>
<organism>
    <name type="scientific">Mus musculus</name>
    <name type="common">Mouse</name>
    <dbReference type="NCBI Taxonomy" id="10090"/>
    <lineage>
        <taxon>Eukaryota</taxon>
        <taxon>Metazoa</taxon>
        <taxon>Chordata</taxon>
        <taxon>Craniata</taxon>
        <taxon>Vertebrata</taxon>
        <taxon>Euteleostomi</taxon>
        <taxon>Mammalia</taxon>
        <taxon>Eutheria</taxon>
        <taxon>Euarchontoglires</taxon>
        <taxon>Glires</taxon>
        <taxon>Rodentia</taxon>
        <taxon>Myomorpha</taxon>
        <taxon>Muroidea</taxon>
        <taxon>Muridae</taxon>
        <taxon>Murinae</taxon>
        <taxon>Mus</taxon>
        <taxon>Mus</taxon>
    </lineage>
</organism>
<accession>Q80WM3</accession>
<accession>Q8C8Y0</accession>
<accession>Q91WE5</accession>
<name>CPLX4_MOUSE</name>
<reference key="1">
    <citation type="journal article" date="2005" name="J. Cell Biol.">
        <title>Structurally and functionally unique complexins at retinal ribbon synapses.</title>
        <authorList>
            <person name="Reim K."/>
            <person name="Wegmeyer H."/>
            <person name="Brandstaetter J.H."/>
            <person name="Xue M."/>
            <person name="Rosenmund C."/>
            <person name="Dresbach T."/>
            <person name="Hofmann K."/>
            <person name="Brose N."/>
        </authorList>
    </citation>
    <scope>NUCLEOTIDE SEQUENCE [MRNA]</scope>
    <scope>FUNCTION</scope>
    <scope>SUBUNIT</scope>
    <scope>SUBCELLULAR LOCATION</scope>
    <scope>TISSUE SPECIFICITY</scope>
    <scope>ISOPRENYLATION AT CYS-157</scope>
    <scope>METHYLATION AT CYS-157</scope>
    <source>
        <strain>BALB/cJ</strain>
        <tissue>Brain</tissue>
    </source>
</reference>
<reference key="2">
    <citation type="journal article" date="2005" name="Science">
        <title>The transcriptional landscape of the mammalian genome.</title>
        <authorList>
            <person name="Carninci P."/>
            <person name="Kasukawa T."/>
            <person name="Katayama S."/>
            <person name="Gough J."/>
            <person name="Frith M.C."/>
            <person name="Maeda N."/>
            <person name="Oyama R."/>
            <person name="Ravasi T."/>
            <person name="Lenhard B."/>
            <person name="Wells C."/>
            <person name="Kodzius R."/>
            <person name="Shimokawa K."/>
            <person name="Bajic V.B."/>
            <person name="Brenner S.E."/>
            <person name="Batalov S."/>
            <person name="Forrest A.R."/>
            <person name="Zavolan M."/>
            <person name="Davis M.J."/>
            <person name="Wilming L.G."/>
            <person name="Aidinis V."/>
            <person name="Allen J.E."/>
            <person name="Ambesi-Impiombato A."/>
            <person name="Apweiler R."/>
            <person name="Aturaliya R.N."/>
            <person name="Bailey T.L."/>
            <person name="Bansal M."/>
            <person name="Baxter L."/>
            <person name="Beisel K.W."/>
            <person name="Bersano T."/>
            <person name="Bono H."/>
            <person name="Chalk A.M."/>
            <person name="Chiu K.P."/>
            <person name="Choudhary V."/>
            <person name="Christoffels A."/>
            <person name="Clutterbuck D.R."/>
            <person name="Crowe M.L."/>
            <person name="Dalla E."/>
            <person name="Dalrymple B.P."/>
            <person name="de Bono B."/>
            <person name="Della Gatta G."/>
            <person name="di Bernardo D."/>
            <person name="Down T."/>
            <person name="Engstrom P."/>
            <person name="Fagiolini M."/>
            <person name="Faulkner G."/>
            <person name="Fletcher C.F."/>
            <person name="Fukushima T."/>
            <person name="Furuno M."/>
            <person name="Futaki S."/>
            <person name="Gariboldi M."/>
            <person name="Georgii-Hemming P."/>
            <person name="Gingeras T.R."/>
            <person name="Gojobori T."/>
            <person name="Green R.E."/>
            <person name="Gustincich S."/>
            <person name="Harbers M."/>
            <person name="Hayashi Y."/>
            <person name="Hensch T.K."/>
            <person name="Hirokawa N."/>
            <person name="Hill D."/>
            <person name="Huminiecki L."/>
            <person name="Iacono M."/>
            <person name="Ikeo K."/>
            <person name="Iwama A."/>
            <person name="Ishikawa T."/>
            <person name="Jakt M."/>
            <person name="Kanapin A."/>
            <person name="Katoh M."/>
            <person name="Kawasawa Y."/>
            <person name="Kelso J."/>
            <person name="Kitamura H."/>
            <person name="Kitano H."/>
            <person name="Kollias G."/>
            <person name="Krishnan S.P."/>
            <person name="Kruger A."/>
            <person name="Kummerfeld S.K."/>
            <person name="Kurochkin I.V."/>
            <person name="Lareau L.F."/>
            <person name="Lazarevic D."/>
            <person name="Lipovich L."/>
            <person name="Liu J."/>
            <person name="Liuni S."/>
            <person name="McWilliam S."/>
            <person name="Madan Babu M."/>
            <person name="Madera M."/>
            <person name="Marchionni L."/>
            <person name="Matsuda H."/>
            <person name="Matsuzawa S."/>
            <person name="Miki H."/>
            <person name="Mignone F."/>
            <person name="Miyake S."/>
            <person name="Morris K."/>
            <person name="Mottagui-Tabar S."/>
            <person name="Mulder N."/>
            <person name="Nakano N."/>
            <person name="Nakauchi H."/>
            <person name="Ng P."/>
            <person name="Nilsson R."/>
            <person name="Nishiguchi S."/>
            <person name="Nishikawa S."/>
            <person name="Nori F."/>
            <person name="Ohara O."/>
            <person name="Okazaki Y."/>
            <person name="Orlando V."/>
            <person name="Pang K.C."/>
            <person name="Pavan W.J."/>
            <person name="Pavesi G."/>
            <person name="Pesole G."/>
            <person name="Petrovsky N."/>
            <person name="Piazza S."/>
            <person name="Reed J."/>
            <person name="Reid J.F."/>
            <person name="Ring B.Z."/>
            <person name="Ringwald M."/>
            <person name="Rost B."/>
            <person name="Ruan Y."/>
            <person name="Salzberg S.L."/>
            <person name="Sandelin A."/>
            <person name="Schneider C."/>
            <person name="Schoenbach C."/>
            <person name="Sekiguchi K."/>
            <person name="Semple C.A."/>
            <person name="Seno S."/>
            <person name="Sessa L."/>
            <person name="Sheng Y."/>
            <person name="Shibata Y."/>
            <person name="Shimada H."/>
            <person name="Shimada K."/>
            <person name="Silva D."/>
            <person name="Sinclair B."/>
            <person name="Sperling S."/>
            <person name="Stupka E."/>
            <person name="Sugiura K."/>
            <person name="Sultana R."/>
            <person name="Takenaka Y."/>
            <person name="Taki K."/>
            <person name="Tammoja K."/>
            <person name="Tan S.L."/>
            <person name="Tang S."/>
            <person name="Taylor M.S."/>
            <person name="Tegner J."/>
            <person name="Teichmann S.A."/>
            <person name="Ueda H.R."/>
            <person name="van Nimwegen E."/>
            <person name="Verardo R."/>
            <person name="Wei C.L."/>
            <person name="Yagi K."/>
            <person name="Yamanishi H."/>
            <person name="Zabarovsky E."/>
            <person name="Zhu S."/>
            <person name="Zimmer A."/>
            <person name="Hide W."/>
            <person name="Bult C."/>
            <person name="Grimmond S.M."/>
            <person name="Teasdale R.D."/>
            <person name="Liu E.T."/>
            <person name="Brusic V."/>
            <person name="Quackenbush J."/>
            <person name="Wahlestedt C."/>
            <person name="Mattick J.S."/>
            <person name="Hume D.A."/>
            <person name="Kai C."/>
            <person name="Sasaki D."/>
            <person name="Tomaru Y."/>
            <person name="Fukuda S."/>
            <person name="Kanamori-Katayama M."/>
            <person name="Suzuki M."/>
            <person name="Aoki J."/>
            <person name="Arakawa T."/>
            <person name="Iida J."/>
            <person name="Imamura K."/>
            <person name="Itoh M."/>
            <person name="Kato T."/>
            <person name="Kawaji H."/>
            <person name="Kawagashira N."/>
            <person name="Kawashima T."/>
            <person name="Kojima M."/>
            <person name="Kondo S."/>
            <person name="Konno H."/>
            <person name="Nakano K."/>
            <person name="Ninomiya N."/>
            <person name="Nishio T."/>
            <person name="Okada M."/>
            <person name="Plessy C."/>
            <person name="Shibata K."/>
            <person name="Shiraki T."/>
            <person name="Suzuki S."/>
            <person name="Tagami M."/>
            <person name="Waki K."/>
            <person name="Watahiki A."/>
            <person name="Okamura-Oho Y."/>
            <person name="Suzuki H."/>
            <person name="Kawai J."/>
            <person name="Hayashizaki Y."/>
        </authorList>
    </citation>
    <scope>NUCLEOTIDE SEQUENCE [LARGE SCALE MRNA]</scope>
    <source>
        <strain>C57BL/6J</strain>
        <tissue>Retina</tissue>
    </source>
</reference>
<reference key="3">
    <citation type="journal article" date="2004" name="Genome Res.">
        <title>The status, quality, and expansion of the NIH full-length cDNA project: the Mammalian Gene Collection (MGC).</title>
        <authorList>
            <consortium name="The MGC Project Team"/>
        </authorList>
    </citation>
    <scope>NUCLEOTIDE SEQUENCE [LARGE SCALE MRNA]</scope>
    <source>
        <tissue>Eye</tissue>
    </source>
</reference>
<reference key="4">
    <citation type="journal article" date="2009" name="J. Cell Sci.">
        <title>Aberrant function and structure of retinal ribbon synapses in the absence of complexin 3 and complexin 4.</title>
        <authorList>
            <person name="Reim K."/>
            <person name="Regus-Leidig H."/>
            <person name="Ammermueller J."/>
            <person name="El-Kordi A."/>
            <person name="Radyushkin K."/>
            <person name="Ehrenreich H."/>
            <person name="Brandstaetter J.H."/>
            <person name="Brose N."/>
        </authorList>
    </citation>
    <scope>FUNCTION</scope>
    <scope>TISSUE SPECIFICITY</scope>
    <scope>DISRUPTION PHENOTYPE</scope>
</reference>
<reference key="5">
    <citation type="journal article" date="2012" name="Eur. J. Neurosci.">
        <title>The absence of Complexin 3 and Complexin 4 differentially impacts the ON and OFF pathways in mouse retina.</title>
        <authorList>
            <person name="Landgraf I."/>
            <person name="Muehlhans J."/>
            <person name="Dedek K."/>
            <person name="Reim K."/>
            <person name="Brandstaetter J.H."/>
            <person name="Ammermueller J."/>
        </authorList>
    </citation>
    <scope>FUNCTION</scope>
    <scope>SUBCELLULAR LOCATION</scope>
    <scope>TISSUE SPECIFICITY</scope>
    <scope>DISRUPTION PHENOTYPE</scope>
</reference>
<reference key="6">
    <citation type="journal article" date="2016" name="J. Neurosci.">
        <title>Functional Roles of Complexin 3 and Complexin 4 at Mouse Photoreceptor Ribbon Synapses.</title>
        <authorList>
            <person name="Babai N."/>
            <person name="Sendelbeck A."/>
            <person name="Regus-Leidig H."/>
            <person name="Fuchs M."/>
            <person name="Mertins J."/>
            <person name="Reim K."/>
            <person name="Brose N."/>
            <person name="Feigenspan A."/>
            <person name="Brandstaetter J.H."/>
        </authorList>
    </citation>
    <scope>FUNCTION</scope>
    <scope>TISSUE SPECIFICITY</scope>
    <scope>DISRUPTION PHENOTYPE</scope>
</reference>
<comment type="function">
    <text evidence="2 3 4 5">Complexin that regulates SNARE protein complex-mediated synaptic vesicle fusion (PubMed:19386896). Required for the maintenance of synaptic ultrastructure in the adult retina (PubMed:19386896). Positively regulates synaptic transmission through synaptic vesicle availability and exocytosis of neurotransmitters at photoreceptor ribbon synapses in the retina (PubMed:15911881, PubMed:19386896, PubMed:27335398). Suppresses tonic photoreceptor activity and baseline 'noise' by suppression of Ca(2+) vesicle tonic release and the facilitation of evoked synchronous and asynchronous Ca(2+) vesicle release (PubMed:22694764, PubMed:27335398).</text>
</comment>
<comment type="subunit">
    <text evidence="2">Weakly binds to the SNARE core complex containing SNAP25, VAMP2 and STX1A.</text>
</comment>
<comment type="subcellular location">
    <subcellularLocation>
        <location evidence="2 4">Synapse</location>
    </subcellularLocation>
    <subcellularLocation>
        <location evidence="2">Cell membrane</location>
        <topology evidence="2">Lipid-anchor</topology>
    </subcellularLocation>
    <text evidence="2">Enriched at the synaptic terminal.</text>
</comment>
<comment type="tissue specificity">
    <text evidence="2 3 4 5">Present specifically in the retina (at protein level) (PubMed:15911881, PubMed:19386896, PubMed:22694764, PubMed:27335398). Expressed in the outer nuclear layer of the retina (at protein level) (PubMed:22694764). Strongly expressed at rod photoreceptor ribbon synapses (at protein level) (PubMed:15911881, PubMed:22694764). Not expressed at conventional amacrine cell synapses, nor at cone photoreceptor ribbon synapses (at protein level) (PubMed:15911881). Weakly expressed at cone photoreceptor synaptic terminals (at protein level) (PubMed:22694764). Not expressed in the brain (at protein level) (PubMed:19386896).</text>
</comment>
<comment type="PTM">
    <text evidence="2">Farnesylation mediates presynaptic targeting and is important for function in neurotransmitter release.</text>
</comment>
<comment type="disruption phenotype">
    <text evidence="3 4 5">Knockout mice are generally phenotypically normal, viable, and fertile (PubMed:19386896). Normal overall retina structure and morphology of the outer plexiform layer (OPL) and inner plexiform layer (IPL) (PubMed:19386896). Abundance and distribution of synaptic proteins remain consistent (PubMed:19386896). Reduced inner retinal processing and retinal synaptic transmission at low light intensities (PubMed:19386896). Cplx3 and Cplx4 double knockout mice are generally phenotypically normal, viable, and fertile, however show disordered morphology of the OPL and vision perturbation when compared to single knockout mice (PubMed:19386896). Cplx3 and Cplx4 double knockout mice show evidence of mild vision perturbation, with a reduction in the number of morphologically normal anchored presynaptic ribbon synapses and a decrease in controlled neurotransmitter release at photoreceptor ribbon synapses (PubMed:19386896). Cplx3 and Cplx4 double knockout mice show a reduced response and sensitivity of ON and OFF ganglion cell response as a result of disrupted synaptic transmission (PubMed:22694764). Cplx3 and Cplx4 double knockout mice show a greater variance in photoreceptor activity response and a decrease in sustained response, this is caused by an increase in release and fusion of synaptic vesicles in an asynchronous manner, this is particularly evident following multiple stimuli (PubMed:27335398).</text>
</comment>
<comment type="similarity">
    <text evidence="6">Belongs to the complexin/synaphin family.</text>
</comment>